<name>PSBD_NEPOL</name>
<organism>
    <name type="scientific">Nephroselmis olivacea</name>
    <name type="common">Green alga</name>
    <dbReference type="NCBI Taxonomy" id="31312"/>
    <lineage>
        <taxon>Eukaryota</taxon>
        <taxon>Viridiplantae</taxon>
        <taxon>Chlorophyta</taxon>
        <taxon>Nephroselmidophyceae</taxon>
        <taxon>Nephroselmidales</taxon>
        <taxon>Nephroselmidaceae</taxon>
        <taxon>Nephroselmis</taxon>
    </lineage>
</organism>
<keyword id="KW-0007">Acetylation</keyword>
<keyword id="KW-0148">Chlorophyll</keyword>
<keyword id="KW-0150">Chloroplast</keyword>
<keyword id="KW-0157">Chromophore</keyword>
<keyword id="KW-0249">Electron transport</keyword>
<keyword id="KW-0408">Iron</keyword>
<keyword id="KW-0460">Magnesium</keyword>
<keyword id="KW-0472">Membrane</keyword>
<keyword id="KW-0479">Metal-binding</keyword>
<keyword id="KW-0560">Oxidoreductase</keyword>
<keyword id="KW-0597">Phosphoprotein</keyword>
<keyword id="KW-0602">Photosynthesis</keyword>
<keyword id="KW-0604">Photosystem II</keyword>
<keyword id="KW-0934">Plastid</keyword>
<keyword id="KW-0793">Thylakoid</keyword>
<keyword id="KW-0812">Transmembrane</keyword>
<keyword id="KW-1133">Transmembrane helix</keyword>
<keyword id="KW-0813">Transport</keyword>
<protein>
    <recommendedName>
        <fullName evidence="2">Photosystem II D2 protein</fullName>
        <shortName evidence="2">PSII D2 protein</shortName>
        <ecNumber evidence="2">1.10.3.9</ecNumber>
    </recommendedName>
    <alternativeName>
        <fullName evidence="2">Photosystem Q(A) protein</fullName>
    </alternativeName>
</protein>
<dbReference type="EC" id="1.10.3.9" evidence="2"/>
<dbReference type="EMBL" id="AF137379">
    <property type="protein sequence ID" value="AAD54816.1"/>
    <property type="molecule type" value="Genomic_DNA"/>
</dbReference>
<dbReference type="RefSeq" id="NP_050845.1">
    <property type="nucleotide sequence ID" value="NC_000927.1"/>
</dbReference>
<dbReference type="SMR" id="Q9TL00"/>
<dbReference type="GeneID" id="801991"/>
<dbReference type="GO" id="GO:0009535">
    <property type="term" value="C:chloroplast thylakoid membrane"/>
    <property type="evidence" value="ECO:0007669"/>
    <property type="project" value="UniProtKB-SubCell"/>
</dbReference>
<dbReference type="GO" id="GO:0009523">
    <property type="term" value="C:photosystem II"/>
    <property type="evidence" value="ECO:0007669"/>
    <property type="project" value="UniProtKB-KW"/>
</dbReference>
<dbReference type="GO" id="GO:0016168">
    <property type="term" value="F:chlorophyll binding"/>
    <property type="evidence" value="ECO:0007669"/>
    <property type="project" value="UniProtKB-UniRule"/>
</dbReference>
<dbReference type="GO" id="GO:0045156">
    <property type="term" value="F:electron transporter, transferring electrons within the cyclic electron transport pathway of photosynthesis activity"/>
    <property type="evidence" value="ECO:0007669"/>
    <property type="project" value="InterPro"/>
</dbReference>
<dbReference type="GO" id="GO:0005506">
    <property type="term" value="F:iron ion binding"/>
    <property type="evidence" value="ECO:0007669"/>
    <property type="project" value="UniProtKB-UniRule"/>
</dbReference>
<dbReference type="GO" id="GO:0010242">
    <property type="term" value="F:oxygen evolving activity"/>
    <property type="evidence" value="ECO:0007669"/>
    <property type="project" value="UniProtKB-EC"/>
</dbReference>
<dbReference type="GO" id="GO:0009772">
    <property type="term" value="P:photosynthetic electron transport in photosystem II"/>
    <property type="evidence" value="ECO:0007669"/>
    <property type="project" value="InterPro"/>
</dbReference>
<dbReference type="CDD" id="cd09288">
    <property type="entry name" value="Photosystem-II_D2"/>
    <property type="match status" value="1"/>
</dbReference>
<dbReference type="FunFam" id="1.20.85.10:FF:000001">
    <property type="entry name" value="photosystem II D2 protein-like"/>
    <property type="match status" value="1"/>
</dbReference>
<dbReference type="Gene3D" id="1.20.85.10">
    <property type="entry name" value="Photosystem II protein D1-like"/>
    <property type="match status" value="1"/>
</dbReference>
<dbReference type="HAMAP" id="MF_01383">
    <property type="entry name" value="PSII_PsbD_D2"/>
    <property type="match status" value="1"/>
</dbReference>
<dbReference type="InterPro" id="IPR055266">
    <property type="entry name" value="D1/D2"/>
</dbReference>
<dbReference type="InterPro" id="IPR036854">
    <property type="entry name" value="Photo_II_D1/D2_sf"/>
</dbReference>
<dbReference type="InterPro" id="IPR000484">
    <property type="entry name" value="Photo_RC_L/M"/>
</dbReference>
<dbReference type="InterPro" id="IPR055265">
    <property type="entry name" value="Photo_RC_L/M_CS"/>
</dbReference>
<dbReference type="InterPro" id="IPR005868">
    <property type="entry name" value="PSII_PsbD/D2"/>
</dbReference>
<dbReference type="NCBIfam" id="TIGR01152">
    <property type="entry name" value="psbD"/>
    <property type="match status" value="1"/>
</dbReference>
<dbReference type="PANTHER" id="PTHR33149:SF12">
    <property type="entry name" value="PHOTOSYSTEM II D2 PROTEIN"/>
    <property type="match status" value="1"/>
</dbReference>
<dbReference type="PANTHER" id="PTHR33149">
    <property type="entry name" value="PHOTOSYSTEM II PROTEIN D1"/>
    <property type="match status" value="1"/>
</dbReference>
<dbReference type="Pfam" id="PF00124">
    <property type="entry name" value="Photo_RC"/>
    <property type="match status" value="1"/>
</dbReference>
<dbReference type="PRINTS" id="PR00256">
    <property type="entry name" value="REACTNCENTRE"/>
</dbReference>
<dbReference type="SUPFAM" id="SSF81483">
    <property type="entry name" value="Bacterial photosystem II reaction centre, L and M subunits"/>
    <property type="match status" value="1"/>
</dbReference>
<dbReference type="PROSITE" id="PS00244">
    <property type="entry name" value="REACTION_CENTER"/>
    <property type="match status" value="1"/>
</dbReference>
<feature type="initiator methionine" description="Removed" evidence="1">
    <location>
        <position position="1"/>
    </location>
</feature>
<feature type="chain" id="PRO_0000090511" description="Photosystem II D2 protein">
    <location>
        <begin position="2"/>
        <end position="352"/>
    </location>
</feature>
<feature type="transmembrane region" description="Helical" evidence="2">
    <location>
        <begin position="40"/>
        <end position="60"/>
    </location>
</feature>
<feature type="transmembrane region" description="Helical" evidence="2">
    <location>
        <begin position="124"/>
        <end position="140"/>
    </location>
</feature>
<feature type="transmembrane region" description="Helical" evidence="2">
    <location>
        <begin position="152"/>
        <end position="165"/>
    </location>
</feature>
<feature type="transmembrane region" description="Helical" evidence="2">
    <location>
        <begin position="207"/>
        <end position="227"/>
    </location>
</feature>
<feature type="transmembrane region" description="Helical" evidence="2">
    <location>
        <begin position="278"/>
        <end position="294"/>
    </location>
</feature>
<feature type="binding site" description="axial binding residue" evidence="2">
    <location>
        <position position="117"/>
    </location>
    <ligand>
        <name>chlorophyll a</name>
        <dbReference type="ChEBI" id="CHEBI:58416"/>
        <label>ChlzD2</label>
    </ligand>
    <ligandPart>
        <name>Mg</name>
        <dbReference type="ChEBI" id="CHEBI:25107"/>
    </ligandPart>
</feature>
<feature type="binding site" evidence="2">
    <location>
        <position position="129"/>
    </location>
    <ligand>
        <name>pheophytin a</name>
        <dbReference type="ChEBI" id="CHEBI:136840"/>
        <label>D2</label>
    </ligand>
</feature>
<feature type="binding site" evidence="2">
    <location>
        <position position="142"/>
    </location>
    <ligand>
        <name>pheophytin a</name>
        <dbReference type="ChEBI" id="CHEBI:136840"/>
        <label>D2</label>
    </ligand>
</feature>
<feature type="binding site" description="axial binding residue" evidence="2">
    <location>
        <position position="197"/>
    </location>
    <ligand>
        <name>chlorophyll a</name>
        <dbReference type="ChEBI" id="CHEBI:58416"/>
        <label>PD2</label>
    </ligand>
    <ligandPart>
        <name>Mg</name>
        <dbReference type="ChEBI" id="CHEBI:25107"/>
    </ligandPart>
</feature>
<feature type="binding site" evidence="2">
    <location>
        <position position="214"/>
    </location>
    <ligand>
        <name>a plastoquinone</name>
        <dbReference type="ChEBI" id="CHEBI:17757"/>
        <label>Q(A)</label>
    </ligand>
</feature>
<feature type="binding site" evidence="2">
    <location>
        <position position="214"/>
    </location>
    <ligand>
        <name>Fe cation</name>
        <dbReference type="ChEBI" id="CHEBI:24875"/>
        <note>ligand shared with heterodimeric partner</note>
    </ligand>
</feature>
<feature type="binding site" evidence="2">
    <location>
        <position position="261"/>
    </location>
    <ligand>
        <name>a plastoquinone</name>
        <dbReference type="ChEBI" id="CHEBI:17757"/>
        <label>Q(A)</label>
    </ligand>
</feature>
<feature type="binding site" evidence="2">
    <location>
        <position position="268"/>
    </location>
    <ligand>
        <name>Fe cation</name>
        <dbReference type="ChEBI" id="CHEBI:24875"/>
        <note>ligand shared with heterodimeric partner</note>
    </ligand>
</feature>
<feature type="modified residue" description="N-acetylthreonine" evidence="1">
    <location>
        <position position="2"/>
    </location>
</feature>
<feature type="modified residue" description="Phosphothreonine" evidence="1">
    <location>
        <position position="2"/>
    </location>
</feature>
<geneLocation type="chloroplast"/>
<sequence length="352" mass="39246">MTIAIGTPEEKRGLFDDMDDWLRRDRFVFVGWSGLLLLPCAYFAVGGWLTGTTFVTSWYTHGLASSYLEGCNVLTAAVSTPANSMAHSLLLLWGPEAQGDFTRWCQLGGLWTFIALHGSFGLIGFMLRQFEIARAIGLRPYNAIAFSGPISVFVSVFLIYPLGQSGWFFAPSFGVAAIFRFILFFQGFHNWTLNPFHMMGVAGVLGAALLCAIHGATVENTLFEDGDGANTFRAFNPTQAEETYSMVTANRFWSQIFGIAFSNKRWLHFFMLFVPVTGLWMSAIGVVGLALNLRAYDFVSQELRAAEDPEFETFYTKNLLLNEGIRAWMAAQDQPHEKLVFPEEVLPRGNAL</sequence>
<reference key="1">
    <citation type="journal article" date="1999" name="Proc. Natl. Acad. Sci. U.S.A.">
        <title>The complete chloroplast DNA sequence of the green alga Nephroselmis olivacea: insights into the architecture of ancestral chloroplast genomes.</title>
        <authorList>
            <person name="Turmel M."/>
            <person name="Otis C."/>
            <person name="Lemieux C."/>
        </authorList>
    </citation>
    <scope>NUCLEOTIDE SEQUENCE [LARGE SCALE GENOMIC DNA]</scope>
    <source>
        <strain>NIES-484 / S-N-5-8</strain>
    </source>
</reference>
<gene>
    <name evidence="2" type="primary">psbD</name>
</gene>
<comment type="function">
    <text evidence="2">Photosystem II (PSII) is a light-driven water:plastoquinone oxidoreductase that uses light energy to abstract electrons from H(2)O, generating O(2) and a proton gradient subsequently used for ATP formation. It consists of a core antenna complex that captures photons, and an electron transfer chain that converts photonic excitation into a charge separation. The D1/D2 (PsbA/PsbD) reaction center heterodimer binds P680, the primary electron donor of PSII as well as several subsequent electron acceptors. D2 is needed for assembly of a stable PSII complex.</text>
</comment>
<comment type="catalytic activity">
    <reaction evidence="2">
        <text>2 a plastoquinone + 4 hnu + 2 H2O = 2 a plastoquinol + O2</text>
        <dbReference type="Rhea" id="RHEA:36359"/>
        <dbReference type="Rhea" id="RHEA-COMP:9561"/>
        <dbReference type="Rhea" id="RHEA-COMP:9562"/>
        <dbReference type="ChEBI" id="CHEBI:15377"/>
        <dbReference type="ChEBI" id="CHEBI:15379"/>
        <dbReference type="ChEBI" id="CHEBI:17757"/>
        <dbReference type="ChEBI" id="CHEBI:30212"/>
        <dbReference type="ChEBI" id="CHEBI:62192"/>
        <dbReference type="EC" id="1.10.3.9"/>
    </reaction>
</comment>
<comment type="cofactor">
    <text evidence="2">The D1/D2 heterodimer binds P680, chlorophylls that are the primary electron donor of PSII, and subsequent electron acceptors. It shares a non-heme iron and each subunit binds pheophytin, quinone, additional chlorophylls, carotenoids and lipids. There is also a Cl(-1) ion associated with D1 and D2, which is required for oxygen evolution. The PSII complex binds additional chlorophylls, carotenoids and specific lipids.</text>
</comment>
<comment type="subunit">
    <text evidence="2">PSII is composed of 1 copy each of membrane proteins PsbA, PsbB, PsbC, PsbD, PsbE, PsbF, PsbH, PsbI, PsbJ, PsbK, PsbL, PsbM, PsbT, PsbX, PsbY, PsbZ, Psb30/Ycf12, at least 3 peripheral proteins of the oxygen-evolving complex and a large number of cofactors. It forms dimeric complexes.</text>
</comment>
<comment type="subcellular location">
    <subcellularLocation>
        <location evidence="2">Plastid</location>
        <location evidence="2">Chloroplast thylakoid membrane</location>
        <topology evidence="2">Multi-pass membrane protein</topology>
    </subcellularLocation>
</comment>
<comment type="miscellaneous">
    <text evidence="2">2 of the reaction center chlorophylls (ChlD1 and ChlD2) are entirely coordinated by water.</text>
</comment>
<comment type="similarity">
    <text evidence="2">Belongs to the reaction center PufL/M/PsbA/D family.</text>
</comment>
<accession>Q9TL00</accession>
<proteinExistence type="inferred from homology"/>
<evidence type="ECO:0000250" key="1">
    <source>
        <dbReference type="UniProtKB" id="P56761"/>
    </source>
</evidence>
<evidence type="ECO:0000255" key="2">
    <source>
        <dbReference type="HAMAP-Rule" id="MF_01383"/>
    </source>
</evidence>